<dbReference type="EC" id="6.3.4.2" evidence="1"/>
<dbReference type="EMBL" id="CP000082">
    <property type="protein sequence ID" value="AAZ19489.1"/>
    <property type="molecule type" value="Genomic_DNA"/>
</dbReference>
<dbReference type="RefSeq" id="WP_011280905.1">
    <property type="nucleotide sequence ID" value="NC_007204.1"/>
</dbReference>
<dbReference type="SMR" id="Q4FR69"/>
<dbReference type="STRING" id="259536.Psyc_1641"/>
<dbReference type="MEROPS" id="C26.964"/>
<dbReference type="KEGG" id="par:Psyc_1641"/>
<dbReference type="eggNOG" id="COG0504">
    <property type="taxonomic scope" value="Bacteria"/>
</dbReference>
<dbReference type="HOGENOM" id="CLU_011675_5_0_6"/>
<dbReference type="OrthoDB" id="9801107at2"/>
<dbReference type="UniPathway" id="UPA00159">
    <property type="reaction ID" value="UER00277"/>
</dbReference>
<dbReference type="Proteomes" id="UP000000546">
    <property type="component" value="Chromosome"/>
</dbReference>
<dbReference type="GO" id="GO:0005829">
    <property type="term" value="C:cytosol"/>
    <property type="evidence" value="ECO:0007669"/>
    <property type="project" value="TreeGrafter"/>
</dbReference>
<dbReference type="GO" id="GO:0005524">
    <property type="term" value="F:ATP binding"/>
    <property type="evidence" value="ECO:0007669"/>
    <property type="project" value="UniProtKB-KW"/>
</dbReference>
<dbReference type="GO" id="GO:0003883">
    <property type="term" value="F:CTP synthase activity"/>
    <property type="evidence" value="ECO:0007669"/>
    <property type="project" value="UniProtKB-UniRule"/>
</dbReference>
<dbReference type="GO" id="GO:0004359">
    <property type="term" value="F:glutaminase activity"/>
    <property type="evidence" value="ECO:0007669"/>
    <property type="project" value="RHEA"/>
</dbReference>
<dbReference type="GO" id="GO:0042802">
    <property type="term" value="F:identical protein binding"/>
    <property type="evidence" value="ECO:0007669"/>
    <property type="project" value="TreeGrafter"/>
</dbReference>
<dbReference type="GO" id="GO:0046872">
    <property type="term" value="F:metal ion binding"/>
    <property type="evidence" value="ECO:0007669"/>
    <property type="project" value="UniProtKB-KW"/>
</dbReference>
<dbReference type="GO" id="GO:0044210">
    <property type="term" value="P:'de novo' CTP biosynthetic process"/>
    <property type="evidence" value="ECO:0007669"/>
    <property type="project" value="UniProtKB-UniRule"/>
</dbReference>
<dbReference type="GO" id="GO:0019856">
    <property type="term" value="P:pyrimidine nucleobase biosynthetic process"/>
    <property type="evidence" value="ECO:0007669"/>
    <property type="project" value="TreeGrafter"/>
</dbReference>
<dbReference type="CDD" id="cd03113">
    <property type="entry name" value="CTPS_N"/>
    <property type="match status" value="1"/>
</dbReference>
<dbReference type="CDD" id="cd01746">
    <property type="entry name" value="GATase1_CTP_Synthase"/>
    <property type="match status" value="1"/>
</dbReference>
<dbReference type="FunFam" id="3.40.50.300:FF:000009">
    <property type="entry name" value="CTP synthase"/>
    <property type="match status" value="1"/>
</dbReference>
<dbReference type="FunFam" id="3.40.50.880:FF:000002">
    <property type="entry name" value="CTP synthase"/>
    <property type="match status" value="1"/>
</dbReference>
<dbReference type="Gene3D" id="3.40.50.880">
    <property type="match status" value="1"/>
</dbReference>
<dbReference type="Gene3D" id="3.40.50.300">
    <property type="entry name" value="P-loop containing nucleotide triphosphate hydrolases"/>
    <property type="match status" value="1"/>
</dbReference>
<dbReference type="HAMAP" id="MF_01227">
    <property type="entry name" value="PyrG"/>
    <property type="match status" value="1"/>
</dbReference>
<dbReference type="InterPro" id="IPR029062">
    <property type="entry name" value="Class_I_gatase-like"/>
</dbReference>
<dbReference type="InterPro" id="IPR004468">
    <property type="entry name" value="CTP_synthase"/>
</dbReference>
<dbReference type="InterPro" id="IPR017456">
    <property type="entry name" value="CTP_synthase_N"/>
</dbReference>
<dbReference type="InterPro" id="IPR017926">
    <property type="entry name" value="GATASE"/>
</dbReference>
<dbReference type="InterPro" id="IPR033828">
    <property type="entry name" value="GATase1_CTP_Synthase"/>
</dbReference>
<dbReference type="InterPro" id="IPR027417">
    <property type="entry name" value="P-loop_NTPase"/>
</dbReference>
<dbReference type="NCBIfam" id="NF003792">
    <property type="entry name" value="PRK05380.1"/>
    <property type="match status" value="1"/>
</dbReference>
<dbReference type="NCBIfam" id="TIGR00337">
    <property type="entry name" value="PyrG"/>
    <property type="match status" value="1"/>
</dbReference>
<dbReference type="PANTHER" id="PTHR11550">
    <property type="entry name" value="CTP SYNTHASE"/>
    <property type="match status" value="1"/>
</dbReference>
<dbReference type="PANTHER" id="PTHR11550:SF0">
    <property type="entry name" value="CTP SYNTHASE-RELATED"/>
    <property type="match status" value="1"/>
</dbReference>
<dbReference type="Pfam" id="PF06418">
    <property type="entry name" value="CTP_synth_N"/>
    <property type="match status" value="1"/>
</dbReference>
<dbReference type="Pfam" id="PF00117">
    <property type="entry name" value="GATase"/>
    <property type="match status" value="1"/>
</dbReference>
<dbReference type="SUPFAM" id="SSF52317">
    <property type="entry name" value="Class I glutamine amidotransferase-like"/>
    <property type="match status" value="1"/>
</dbReference>
<dbReference type="SUPFAM" id="SSF52540">
    <property type="entry name" value="P-loop containing nucleoside triphosphate hydrolases"/>
    <property type="match status" value="1"/>
</dbReference>
<dbReference type="PROSITE" id="PS51273">
    <property type="entry name" value="GATASE_TYPE_1"/>
    <property type="match status" value="1"/>
</dbReference>
<sequence length="544" mass="60460">MTKFIFVTGGVVSSLGKGITAASLAAVLEARGVNVTMTKMDPYINVDPGTMSPFQHGEVFVTEDGAETDLDLGYYERFLRHSKMSKSNNFTSGRIYQNVLNKERRGEYLGGTVQVIPHITDEIKSKILASGEGYDVAIIEIGGTVGDIESLPFMEAVRQMQVELGRHRAMLMHLTLVPYIASAGETKTKPTQHSVKELRSIGLQPDILICRSDHHISPDNRRKIALFTNVEERAVIMCEDAQSIYQIPRTLHEQDLDDLICERFGLDLPEADLSDWDKVVEAQLNPESTVTVAMVGKYVELPDAYKSINEALLHAGITHKVDVKIDYIDAERLEDDDSLLAQLHNADAILVPGGFGERGTMGKIKAITYARENKVPYLGICLGMQLAVIEYARNVLHIDANSSEFDRKTAEPIIGLITEWLDERGELQIRSDDSDLGGTMRLGAQQAELVAGSKLAQIYGATNITERHRHRYEMNNRYIEPLEQAGMTISGYSAKQHLVESVELADHPWFVAVQFHPEFTSSPRGGHPLFNSFVKAAKNYSEAK</sequence>
<name>PYRG_PSYA2</name>
<gene>
    <name evidence="1" type="primary">pyrG</name>
    <name type="ordered locus">Psyc_1641</name>
</gene>
<feature type="chain" id="PRO_0000266189" description="CTP synthase">
    <location>
        <begin position="1"/>
        <end position="544"/>
    </location>
</feature>
<feature type="domain" description="Glutamine amidotransferase type-1" evidence="1">
    <location>
        <begin position="291"/>
        <end position="543"/>
    </location>
</feature>
<feature type="region of interest" description="Amidoligase domain" evidence="1">
    <location>
        <begin position="1"/>
        <end position="266"/>
    </location>
</feature>
<feature type="active site" description="Nucleophile; for glutamine hydrolysis" evidence="1">
    <location>
        <position position="381"/>
    </location>
</feature>
<feature type="active site" evidence="1">
    <location>
        <position position="516"/>
    </location>
</feature>
<feature type="active site" evidence="1">
    <location>
        <position position="518"/>
    </location>
</feature>
<feature type="binding site" evidence="1">
    <location>
        <position position="13"/>
    </location>
    <ligand>
        <name>CTP</name>
        <dbReference type="ChEBI" id="CHEBI:37563"/>
        <note>allosteric inhibitor</note>
    </ligand>
</feature>
<feature type="binding site" evidence="1">
    <location>
        <position position="13"/>
    </location>
    <ligand>
        <name>UTP</name>
        <dbReference type="ChEBI" id="CHEBI:46398"/>
    </ligand>
</feature>
<feature type="binding site" evidence="1">
    <location>
        <begin position="14"/>
        <end position="19"/>
    </location>
    <ligand>
        <name>ATP</name>
        <dbReference type="ChEBI" id="CHEBI:30616"/>
    </ligand>
</feature>
<feature type="binding site" evidence="1">
    <location>
        <position position="71"/>
    </location>
    <ligand>
        <name>ATP</name>
        <dbReference type="ChEBI" id="CHEBI:30616"/>
    </ligand>
</feature>
<feature type="binding site" evidence="1">
    <location>
        <position position="71"/>
    </location>
    <ligand>
        <name>Mg(2+)</name>
        <dbReference type="ChEBI" id="CHEBI:18420"/>
    </ligand>
</feature>
<feature type="binding site" evidence="1">
    <location>
        <position position="140"/>
    </location>
    <ligand>
        <name>Mg(2+)</name>
        <dbReference type="ChEBI" id="CHEBI:18420"/>
    </ligand>
</feature>
<feature type="binding site" evidence="1">
    <location>
        <begin position="147"/>
        <end position="149"/>
    </location>
    <ligand>
        <name>CTP</name>
        <dbReference type="ChEBI" id="CHEBI:37563"/>
        <note>allosteric inhibitor</note>
    </ligand>
</feature>
<feature type="binding site" evidence="1">
    <location>
        <begin position="187"/>
        <end position="192"/>
    </location>
    <ligand>
        <name>CTP</name>
        <dbReference type="ChEBI" id="CHEBI:37563"/>
        <note>allosteric inhibitor</note>
    </ligand>
</feature>
<feature type="binding site" evidence="1">
    <location>
        <begin position="187"/>
        <end position="192"/>
    </location>
    <ligand>
        <name>UTP</name>
        <dbReference type="ChEBI" id="CHEBI:46398"/>
    </ligand>
</feature>
<feature type="binding site" evidence="1">
    <location>
        <position position="223"/>
    </location>
    <ligand>
        <name>CTP</name>
        <dbReference type="ChEBI" id="CHEBI:37563"/>
        <note>allosteric inhibitor</note>
    </ligand>
</feature>
<feature type="binding site" evidence="1">
    <location>
        <position position="223"/>
    </location>
    <ligand>
        <name>UTP</name>
        <dbReference type="ChEBI" id="CHEBI:46398"/>
    </ligand>
</feature>
<feature type="binding site" evidence="1">
    <location>
        <position position="354"/>
    </location>
    <ligand>
        <name>L-glutamine</name>
        <dbReference type="ChEBI" id="CHEBI:58359"/>
    </ligand>
</feature>
<feature type="binding site" evidence="1">
    <location>
        <begin position="382"/>
        <end position="385"/>
    </location>
    <ligand>
        <name>L-glutamine</name>
        <dbReference type="ChEBI" id="CHEBI:58359"/>
    </ligand>
</feature>
<feature type="binding site" evidence="1">
    <location>
        <position position="404"/>
    </location>
    <ligand>
        <name>L-glutamine</name>
        <dbReference type="ChEBI" id="CHEBI:58359"/>
    </ligand>
</feature>
<feature type="binding site" evidence="1">
    <location>
        <position position="471"/>
    </location>
    <ligand>
        <name>L-glutamine</name>
        <dbReference type="ChEBI" id="CHEBI:58359"/>
    </ligand>
</feature>
<organism>
    <name type="scientific">Psychrobacter arcticus (strain DSM 17307 / VKM B-2377 / 273-4)</name>
    <dbReference type="NCBI Taxonomy" id="259536"/>
    <lineage>
        <taxon>Bacteria</taxon>
        <taxon>Pseudomonadati</taxon>
        <taxon>Pseudomonadota</taxon>
        <taxon>Gammaproteobacteria</taxon>
        <taxon>Moraxellales</taxon>
        <taxon>Moraxellaceae</taxon>
        <taxon>Psychrobacter</taxon>
    </lineage>
</organism>
<comment type="function">
    <text evidence="1">Catalyzes the ATP-dependent amination of UTP to CTP with either L-glutamine or ammonia as the source of nitrogen. Regulates intracellular CTP levels through interactions with the four ribonucleotide triphosphates.</text>
</comment>
<comment type="catalytic activity">
    <reaction evidence="1">
        <text>UTP + L-glutamine + ATP + H2O = CTP + L-glutamate + ADP + phosphate + 2 H(+)</text>
        <dbReference type="Rhea" id="RHEA:26426"/>
        <dbReference type="ChEBI" id="CHEBI:15377"/>
        <dbReference type="ChEBI" id="CHEBI:15378"/>
        <dbReference type="ChEBI" id="CHEBI:29985"/>
        <dbReference type="ChEBI" id="CHEBI:30616"/>
        <dbReference type="ChEBI" id="CHEBI:37563"/>
        <dbReference type="ChEBI" id="CHEBI:43474"/>
        <dbReference type="ChEBI" id="CHEBI:46398"/>
        <dbReference type="ChEBI" id="CHEBI:58359"/>
        <dbReference type="ChEBI" id="CHEBI:456216"/>
        <dbReference type="EC" id="6.3.4.2"/>
    </reaction>
</comment>
<comment type="catalytic activity">
    <reaction evidence="1">
        <text>L-glutamine + H2O = L-glutamate + NH4(+)</text>
        <dbReference type="Rhea" id="RHEA:15889"/>
        <dbReference type="ChEBI" id="CHEBI:15377"/>
        <dbReference type="ChEBI" id="CHEBI:28938"/>
        <dbReference type="ChEBI" id="CHEBI:29985"/>
        <dbReference type="ChEBI" id="CHEBI:58359"/>
    </reaction>
</comment>
<comment type="catalytic activity">
    <reaction evidence="1">
        <text>UTP + NH4(+) + ATP = CTP + ADP + phosphate + 2 H(+)</text>
        <dbReference type="Rhea" id="RHEA:16597"/>
        <dbReference type="ChEBI" id="CHEBI:15378"/>
        <dbReference type="ChEBI" id="CHEBI:28938"/>
        <dbReference type="ChEBI" id="CHEBI:30616"/>
        <dbReference type="ChEBI" id="CHEBI:37563"/>
        <dbReference type="ChEBI" id="CHEBI:43474"/>
        <dbReference type="ChEBI" id="CHEBI:46398"/>
        <dbReference type="ChEBI" id="CHEBI:456216"/>
    </reaction>
</comment>
<comment type="activity regulation">
    <text evidence="1">Allosterically activated by GTP, when glutamine is the substrate; GTP has no effect on the reaction when ammonia is the substrate. The allosteric effector GTP functions by stabilizing the protein conformation that binds the tetrahedral intermediate(s) formed during glutamine hydrolysis. Inhibited by the product CTP, via allosteric rather than competitive inhibition.</text>
</comment>
<comment type="pathway">
    <text evidence="1">Pyrimidine metabolism; CTP biosynthesis via de novo pathway; CTP from UDP: step 2/2.</text>
</comment>
<comment type="subunit">
    <text evidence="1">Homotetramer.</text>
</comment>
<comment type="miscellaneous">
    <text evidence="1">CTPSs have evolved a hybrid strategy for distinguishing between UTP and CTP. The overlapping regions of the product feedback inhibitory and substrate sites recognize a common feature in both compounds, the triphosphate moiety. To differentiate isosteric substrate and product pyrimidine rings, an additional pocket far from the expected kinase/ligase catalytic site, specifically recognizes the cytosine and ribose portions of the product inhibitor.</text>
</comment>
<comment type="similarity">
    <text evidence="1">Belongs to the CTP synthase family.</text>
</comment>
<reference key="1">
    <citation type="journal article" date="2010" name="Appl. Environ. Microbiol.">
        <title>The genome sequence of Psychrobacter arcticus 273-4, a psychroactive Siberian permafrost bacterium, reveals mechanisms for adaptation to low-temperature growth.</title>
        <authorList>
            <person name="Ayala-del-Rio H.L."/>
            <person name="Chain P.S."/>
            <person name="Grzymski J.J."/>
            <person name="Ponder M.A."/>
            <person name="Ivanova N."/>
            <person name="Bergholz P.W."/>
            <person name="Di Bartolo G."/>
            <person name="Hauser L."/>
            <person name="Land M."/>
            <person name="Bakermans C."/>
            <person name="Rodrigues D."/>
            <person name="Klappenbach J."/>
            <person name="Zarka D."/>
            <person name="Larimer F."/>
            <person name="Richardson P."/>
            <person name="Murray A."/>
            <person name="Thomashow M."/>
            <person name="Tiedje J.M."/>
        </authorList>
    </citation>
    <scope>NUCLEOTIDE SEQUENCE [LARGE SCALE GENOMIC DNA]</scope>
    <source>
        <strain>DSM 17307 / VKM B-2377 / 273-4</strain>
    </source>
</reference>
<keyword id="KW-0067">ATP-binding</keyword>
<keyword id="KW-0315">Glutamine amidotransferase</keyword>
<keyword id="KW-0436">Ligase</keyword>
<keyword id="KW-0460">Magnesium</keyword>
<keyword id="KW-0479">Metal-binding</keyword>
<keyword id="KW-0547">Nucleotide-binding</keyword>
<keyword id="KW-0665">Pyrimidine biosynthesis</keyword>
<keyword id="KW-1185">Reference proteome</keyword>
<accession>Q4FR69</accession>
<protein>
    <recommendedName>
        <fullName evidence="1">CTP synthase</fullName>
        <ecNumber evidence="1">6.3.4.2</ecNumber>
    </recommendedName>
    <alternativeName>
        <fullName evidence="1">Cytidine 5'-triphosphate synthase</fullName>
    </alternativeName>
    <alternativeName>
        <fullName evidence="1">Cytidine triphosphate synthetase</fullName>
        <shortName evidence="1">CTP synthetase</shortName>
        <shortName evidence="1">CTPS</shortName>
    </alternativeName>
    <alternativeName>
        <fullName evidence="1">UTP--ammonia ligase</fullName>
    </alternativeName>
</protein>
<evidence type="ECO:0000255" key="1">
    <source>
        <dbReference type="HAMAP-Rule" id="MF_01227"/>
    </source>
</evidence>
<proteinExistence type="inferred from homology"/>